<organism>
    <name type="scientific">Drosophila melanogaster</name>
    <name type="common">Fruit fly</name>
    <dbReference type="NCBI Taxonomy" id="7227"/>
    <lineage>
        <taxon>Eukaryota</taxon>
        <taxon>Metazoa</taxon>
        <taxon>Ecdysozoa</taxon>
        <taxon>Arthropoda</taxon>
        <taxon>Hexapoda</taxon>
        <taxon>Insecta</taxon>
        <taxon>Pterygota</taxon>
        <taxon>Neoptera</taxon>
        <taxon>Endopterygota</taxon>
        <taxon>Diptera</taxon>
        <taxon>Brachycera</taxon>
        <taxon>Muscomorpha</taxon>
        <taxon>Ephydroidea</taxon>
        <taxon>Drosophilidae</taxon>
        <taxon>Drosophila</taxon>
        <taxon>Sophophora</taxon>
    </lineage>
</organism>
<dbReference type="EMBL" id="AE014134">
    <property type="protein sequence ID" value="AAF52595.2"/>
    <property type="molecule type" value="Genomic_DNA"/>
</dbReference>
<dbReference type="EMBL" id="AY071457">
    <property type="protein sequence ID" value="AAL49079.1"/>
    <property type="molecule type" value="mRNA"/>
</dbReference>
<dbReference type="RefSeq" id="NP_609178.1">
    <property type="nucleotide sequence ID" value="NM_135334.5"/>
</dbReference>
<dbReference type="SMR" id="Q9VLT8"/>
<dbReference type="BioGRID" id="60231">
    <property type="interactions" value="9"/>
</dbReference>
<dbReference type="ComplexPortal" id="CPX-2562">
    <property type="entry name" value="WASH complex"/>
</dbReference>
<dbReference type="FunCoup" id="Q9VLT8">
    <property type="interactions" value="1094"/>
</dbReference>
<dbReference type="IntAct" id="Q9VLT8">
    <property type="interactions" value="4"/>
</dbReference>
<dbReference type="STRING" id="7227.FBpp0079162"/>
<dbReference type="PaxDb" id="7227-FBpp0079162"/>
<dbReference type="DNASU" id="34097"/>
<dbReference type="EnsemblMetazoa" id="FBtr0079540">
    <property type="protein sequence ID" value="FBpp0079162"/>
    <property type="gene ID" value="FBgn0031979"/>
</dbReference>
<dbReference type="GeneID" id="34097"/>
<dbReference type="KEGG" id="dme:Dmel_CG7429"/>
<dbReference type="UCSC" id="CG7429-RA">
    <property type="organism name" value="d. melanogaster"/>
</dbReference>
<dbReference type="AGR" id="FB:FBgn0031979"/>
<dbReference type="CTD" id="34097"/>
<dbReference type="FlyBase" id="FBgn0031979">
    <property type="gene designation" value="CCDC53"/>
</dbReference>
<dbReference type="VEuPathDB" id="VectorBase:FBgn0031979"/>
<dbReference type="eggNOG" id="KOG4496">
    <property type="taxonomic scope" value="Eukaryota"/>
</dbReference>
<dbReference type="GeneTree" id="ENSGT00390000014084"/>
<dbReference type="HOGENOM" id="CLU_117940_1_0_1"/>
<dbReference type="InParanoid" id="Q9VLT8"/>
<dbReference type="OMA" id="GCETKFV"/>
<dbReference type="OrthoDB" id="268027at2759"/>
<dbReference type="PhylomeDB" id="Q9VLT8"/>
<dbReference type="BioGRID-ORCS" id="34097">
    <property type="hits" value="0 hits in 1 CRISPR screen"/>
</dbReference>
<dbReference type="ChiTaRS" id="CCDC53">
    <property type="organism name" value="fly"/>
</dbReference>
<dbReference type="GenomeRNAi" id="34097"/>
<dbReference type="PRO" id="PR:Q9VLT8"/>
<dbReference type="Proteomes" id="UP000000803">
    <property type="component" value="Chromosome 2L"/>
</dbReference>
<dbReference type="Bgee" id="FBgn0031979">
    <property type="expression patterns" value="Expressed in adult class III enteroendocrine cell in adult midgut (Drosophila) and 38 other cell types or tissues"/>
</dbReference>
<dbReference type="GO" id="GO:0005769">
    <property type="term" value="C:early endosome"/>
    <property type="evidence" value="ECO:0007669"/>
    <property type="project" value="UniProtKB-SubCell"/>
</dbReference>
<dbReference type="GO" id="GO:0005654">
    <property type="term" value="C:nucleoplasm"/>
    <property type="evidence" value="ECO:0000314"/>
    <property type="project" value="FlyBase"/>
</dbReference>
<dbReference type="GO" id="GO:0071203">
    <property type="term" value="C:WASH complex"/>
    <property type="evidence" value="ECO:0000314"/>
    <property type="project" value="UniProtKB"/>
</dbReference>
<dbReference type="GO" id="GO:0030041">
    <property type="term" value="P:actin filament polymerization"/>
    <property type="evidence" value="ECO:0000318"/>
    <property type="project" value="GO_Central"/>
</dbReference>
<dbReference type="GO" id="GO:0006887">
    <property type="term" value="P:exocytosis"/>
    <property type="evidence" value="ECO:0000318"/>
    <property type="project" value="GO_Central"/>
</dbReference>
<dbReference type="GO" id="GO:0140591">
    <property type="term" value="P:nuclear envelope budding"/>
    <property type="evidence" value="ECO:0000315"/>
    <property type="project" value="FlyBase"/>
</dbReference>
<dbReference type="GO" id="GO:0045785">
    <property type="term" value="P:positive regulation of cell adhesion"/>
    <property type="evidence" value="ECO:0000315"/>
    <property type="project" value="FlyBase"/>
</dbReference>
<dbReference type="GO" id="GO:0015031">
    <property type="term" value="P:protein transport"/>
    <property type="evidence" value="ECO:0007669"/>
    <property type="project" value="UniProtKB-KW"/>
</dbReference>
<dbReference type="Gene3D" id="1.20.5.110">
    <property type="match status" value="1"/>
</dbReference>
<dbReference type="InterPro" id="IPR019309">
    <property type="entry name" value="WASHC3"/>
</dbReference>
<dbReference type="PANTHER" id="PTHR13015">
    <property type="entry name" value="PROTEIN AD-016-RELATED"/>
    <property type="match status" value="1"/>
</dbReference>
<dbReference type="PANTHER" id="PTHR13015:SF0">
    <property type="entry name" value="WASH COMPLEX SUBUNIT 3"/>
    <property type="match status" value="1"/>
</dbReference>
<dbReference type="Pfam" id="PF10152">
    <property type="entry name" value="CCDC53"/>
    <property type="match status" value="1"/>
</dbReference>
<reference key="1">
    <citation type="journal article" date="2000" name="Science">
        <title>The genome sequence of Drosophila melanogaster.</title>
        <authorList>
            <person name="Adams M.D."/>
            <person name="Celniker S.E."/>
            <person name="Holt R.A."/>
            <person name="Evans C.A."/>
            <person name="Gocayne J.D."/>
            <person name="Amanatides P.G."/>
            <person name="Scherer S.E."/>
            <person name="Li P.W."/>
            <person name="Hoskins R.A."/>
            <person name="Galle R.F."/>
            <person name="George R.A."/>
            <person name="Lewis S.E."/>
            <person name="Richards S."/>
            <person name="Ashburner M."/>
            <person name="Henderson S.N."/>
            <person name="Sutton G.G."/>
            <person name="Wortman J.R."/>
            <person name="Yandell M.D."/>
            <person name="Zhang Q."/>
            <person name="Chen L.X."/>
            <person name="Brandon R.C."/>
            <person name="Rogers Y.-H.C."/>
            <person name="Blazej R.G."/>
            <person name="Champe M."/>
            <person name="Pfeiffer B.D."/>
            <person name="Wan K.H."/>
            <person name="Doyle C."/>
            <person name="Baxter E.G."/>
            <person name="Helt G."/>
            <person name="Nelson C.R."/>
            <person name="Miklos G.L.G."/>
            <person name="Abril J.F."/>
            <person name="Agbayani A."/>
            <person name="An H.-J."/>
            <person name="Andrews-Pfannkoch C."/>
            <person name="Baldwin D."/>
            <person name="Ballew R.M."/>
            <person name="Basu A."/>
            <person name="Baxendale J."/>
            <person name="Bayraktaroglu L."/>
            <person name="Beasley E.M."/>
            <person name="Beeson K.Y."/>
            <person name="Benos P.V."/>
            <person name="Berman B.P."/>
            <person name="Bhandari D."/>
            <person name="Bolshakov S."/>
            <person name="Borkova D."/>
            <person name="Botchan M.R."/>
            <person name="Bouck J."/>
            <person name="Brokstein P."/>
            <person name="Brottier P."/>
            <person name="Burtis K.C."/>
            <person name="Busam D.A."/>
            <person name="Butler H."/>
            <person name="Cadieu E."/>
            <person name="Center A."/>
            <person name="Chandra I."/>
            <person name="Cherry J.M."/>
            <person name="Cawley S."/>
            <person name="Dahlke C."/>
            <person name="Davenport L.B."/>
            <person name="Davies P."/>
            <person name="de Pablos B."/>
            <person name="Delcher A."/>
            <person name="Deng Z."/>
            <person name="Mays A.D."/>
            <person name="Dew I."/>
            <person name="Dietz S.M."/>
            <person name="Dodson K."/>
            <person name="Doup L.E."/>
            <person name="Downes M."/>
            <person name="Dugan-Rocha S."/>
            <person name="Dunkov B.C."/>
            <person name="Dunn P."/>
            <person name="Durbin K.J."/>
            <person name="Evangelista C.C."/>
            <person name="Ferraz C."/>
            <person name="Ferriera S."/>
            <person name="Fleischmann W."/>
            <person name="Fosler C."/>
            <person name="Gabrielian A.E."/>
            <person name="Garg N.S."/>
            <person name="Gelbart W.M."/>
            <person name="Glasser K."/>
            <person name="Glodek A."/>
            <person name="Gong F."/>
            <person name="Gorrell J.H."/>
            <person name="Gu Z."/>
            <person name="Guan P."/>
            <person name="Harris M."/>
            <person name="Harris N.L."/>
            <person name="Harvey D.A."/>
            <person name="Heiman T.J."/>
            <person name="Hernandez J.R."/>
            <person name="Houck J."/>
            <person name="Hostin D."/>
            <person name="Houston K.A."/>
            <person name="Howland T.J."/>
            <person name="Wei M.-H."/>
            <person name="Ibegwam C."/>
            <person name="Jalali M."/>
            <person name="Kalush F."/>
            <person name="Karpen G.H."/>
            <person name="Ke Z."/>
            <person name="Kennison J.A."/>
            <person name="Ketchum K.A."/>
            <person name="Kimmel B.E."/>
            <person name="Kodira C.D."/>
            <person name="Kraft C.L."/>
            <person name="Kravitz S."/>
            <person name="Kulp D."/>
            <person name="Lai Z."/>
            <person name="Lasko P."/>
            <person name="Lei Y."/>
            <person name="Levitsky A.A."/>
            <person name="Li J.H."/>
            <person name="Li Z."/>
            <person name="Liang Y."/>
            <person name="Lin X."/>
            <person name="Liu X."/>
            <person name="Mattei B."/>
            <person name="McIntosh T.C."/>
            <person name="McLeod M.P."/>
            <person name="McPherson D."/>
            <person name="Merkulov G."/>
            <person name="Milshina N.V."/>
            <person name="Mobarry C."/>
            <person name="Morris J."/>
            <person name="Moshrefi A."/>
            <person name="Mount S.M."/>
            <person name="Moy M."/>
            <person name="Murphy B."/>
            <person name="Murphy L."/>
            <person name="Muzny D.M."/>
            <person name="Nelson D.L."/>
            <person name="Nelson D.R."/>
            <person name="Nelson K.A."/>
            <person name="Nixon K."/>
            <person name="Nusskern D.R."/>
            <person name="Pacleb J.M."/>
            <person name="Palazzolo M."/>
            <person name="Pittman G.S."/>
            <person name="Pan S."/>
            <person name="Pollard J."/>
            <person name="Puri V."/>
            <person name="Reese M.G."/>
            <person name="Reinert K."/>
            <person name="Remington K."/>
            <person name="Saunders R.D.C."/>
            <person name="Scheeler F."/>
            <person name="Shen H."/>
            <person name="Shue B.C."/>
            <person name="Siden-Kiamos I."/>
            <person name="Simpson M."/>
            <person name="Skupski M.P."/>
            <person name="Smith T.J."/>
            <person name="Spier E."/>
            <person name="Spradling A.C."/>
            <person name="Stapleton M."/>
            <person name="Strong R."/>
            <person name="Sun E."/>
            <person name="Svirskas R."/>
            <person name="Tector C."/>
            <person name="Turner R."/>
            <person name="Venter E."/>
            <person name="Wang A.H."/>
            <person name="Wang X."/>
            <person name="Wang Z.-Y."/>
            <person name="Wassarman D.A."/>
            <person name="Weinstock G.M."/>
            <person name="Weissenbach J."/>
            <person name="Williams S.M."/>
            <person name="Woodage T."/>
            <person name="Worley K.C."/>
            <person name="Wu D."/>
            <person name="Yang S."/>
            <person name="Yao Q.A."/>
            <person name="Ye J."/>
            <person name="Yeh R.-F."/>
            <person name="Zaveri J.S."/>
            <person name="Zhan M."/>
            <person name="Zhang G."/>
            <person name="Zhao Q."/>
            <person name="Zheng L."/>
            <person name="Zheng X.H."/>
            <person name="Zhong F.N."/>
            <person name="Zhong W."/>
            <person name="Zhou X."/>
            <person name="Zhu S.C."/>
            <person name="Zhu X."/>
            <person name="Smith H.O."/>
            <person name="Gibbs R.A."/>
            <person name="Myers E.W."/>
            <person name="Rubin G.M."/>
            <person name="Venter J.C."/>
        </authorList>
    </citation>
    <scope>NUCLEOTIDE SEQUENCE [LARGE SCALE GENOMIC DNA]</scope>
    <source>
        <strain>Berkeley</strain>
    </source>
</reference>
<reference key="2">
    <citation type="journal article" date="2002" name="Genome Biol.">
        <title>Annotation of the Drosophila melanogaster euchromatic genome: a systematic review.</title>
        <authorList>
            <person name="Misra S."/>
            <person name="Crosby M.A."/>
            <person name="Mungall C.J."/>
            <person name="Matthews B.B."/>
            <person name="Campbell K.S."/>
            <person name="Hradecky P."/>
            <person name="Huang Y."/>
            <person name="Kaminker J.S."/>
            <person name="Millburn G.H."/>
            <person name="Prochnik S.E."/>
            <person name="Smith C.D."/>
            <person name="Tupy J.L."/>
            <person name="Whitfield E.J."/>
            <person name="Bayraktaroglu L."/>
            <person name="Berman B.P."/>
            <person name="Bettencourt B.R."/>
            <person name="Celniker S.E."/>
            <person name="de Grey A.D.N.J."/>
            <person name="Drysdale R.A."/>
            <person name="Harris N.L."/>
            <person name="Richter J."/>
            <person name="Russo S."/>
            <person name="Schroeder A.J."/>
            <person name="Shu S.Q."/>
            <person name="Stapleton M."/>
            <person name="Yamada C."/>
            <person name="Ashburner M."/>
            <person name="Gelbart W.M."/>
            <person name="Rubin G.M."/>
            <person name="Lewis S.E."/>
        </authorList>
    </citation>
    <scope>GENOME REANNOTATION</scope>
    <source>
        <strain>Berkeley</strain>
    </source>
</reference>
<reference key="3">
    <citation type="journal article" date="2002" name="Genome Biol.">
        <title>A Drosophila full-length cDNA resource.</title>
        <authorList>
            <person name="Stapleton M."/>
            <person name="Carlson J.W."/>
            <person name="Brokstein P."/>
            <person name="Yu C."/>
            <person name="Champe M."/>
            <person name="George R.A."/>
            <person name="Guarin H."/>
            <person name="Kronmiller B."/>
            <person name="Pacleb J.M."/>
            <person name="Park S."/>
            <person name="Wan K.H."/>
            <person name="Rubin G.M."/>
            <person name="Celniker S.E."/>
        </authorList>
    </citation>
    <scope>NUCLEOTIDE SEQUENCE [LARGE SCALE MRNA]</scope>
    <source>
        <strain>Berkeley</strain>
        <tissue>Embryo</tissue>
    </source>
</reference>
<reference key="4">
    <citation type="journal article" date="2010" name="Proc. Natl. Acad. Sci. U.S.A.">
        <title>WASH and WAVE actin regulators of the Wiskott-Aldrich syndrome protein (WASP) family are controlled by analogous structurally related complexes.</title>
        <authorList>
            <person name="Jia D."/>
            <person name="Gomez T.S."/>
            <person name="Metlagel Z."/>
            <person name="Umetani J."/>
            <person name="Otwinowski Z."/>
            <person name="Rosen M.K."/>
            <person name="Billadeau D.D."/>
        </authorList>
    </citation>
    <scope>SUBUNIT</scope>
</reference>
<reference key="5">
    <citation type="journal article" date="2015" name="Mol. Biol. Cell">
        <title>Wash functions downstream of Rho1 GTPase in a subset of Drosophila immune cell developmental migrations.</title>
        <authorList>
            <person name="Verboon J.M."/>
            <person name="Rahe T.K."/>
            <person name="Rodriguez-Mesa E."/>
            <person name="Parkhurst S.M."/>
        </authorList>
    </citation>
    <scope>FUNCTION</scope>
</reference>
<name>WASC3_DROME</name>
<gene>
    <name evidence="7" type="primary">CCDC53</name>
    <name evidence="7" type="ORF">CG7429</name>
</gene>
<proteinExistence type="evidence at protein level"/>
<comment type="function">
    <text evidence="1 5">Acts at least in part as component of the WASH complex which may regulate wash nucleation-promoting factor (NPF) activity and is required for its membrane targeting during endosomal sorting (By similarity). During embryogenesis, not involved in the wash-dependent developmental migration of hemocytes anteriorly from the tail (PubMed:25739458).</text>
</comment>
<comment type="subunit">
    <text evidence="4">Component of the WASH complex.</text>
</comment>
<comment type="interaction">
    <interactant intactId="EBI-189750">
        <id>Q9VLT8</id>
    </interactant>
    <interactant intactId="EBI-106128">
        <id>Q9VK90</id>
        <label>BcDNA:RE36920</label>
    </interactant>
    <organismsDiffer>false</organismsDiffer>
    <experiments>3</experiments>
</comment>
<comment type="subcellular location">
    <subcellularLocation>
        <location evidence="6">Early endosome</location>
    </subcellularLocation>
</comment>
<comment type="similarity">
    <text evidence="6">Belongs to the CCDC53 family.</text>
</comment>
<feature type="chain" id="PRO_0000390958" description="WASH complex subunit 3">
    <location>
        <begin position="1"/>
        <end position="176"/>
    </location>
</feature>
<feature type="region of interest" description="Disordered" evidence="3">
    <location>
        <begin position="84"/>
        <end position="123"/>
    </location>
</feature>
<feature type="region of interest" description="Disordered" evidence="3">
    <location>
        <begin position="152"/>
        <end position="176"/>
    </location>
</feature>
<feature type="coiled-coil region" evidence="2">
    <location>
        <begin position="47"/>
        <end position="74"/>
    </location>
</feature>
<feature type="compositionally biased region" description="Low complexity" evidence="3">
    <location>
        <begin position="104"/>
        <end position="115"/>
    </location>
</feature>
<sequence>MDATAAITGNVDKTQIPPLNQKRILAFVNHFLVSTCTFLNEFALGCETKFVEMERQLQKTEAALIILEAKLASIPTEHHVATEATEAPAISNQQRNEEASMVDTTEPPTTENPTEPELPPESVGVRACEDQRYRKFFKMVQVGVPAPAVKQKMQSEGLEPRILDTPDLILADGQRE</sequence>
<protein>
    <recommendedName>
        <fullName evidence="1">WASH complex subunit 3</fullName>
    </recommendedName>
    <alternativeName>
        <fullName evidence="6">Coiled-coil domain-containing protein 53 homolog</fullName>
    </alternativeName>
</protein>
<evidence type="ECO:0000250" key="1">
    <source>
        <dbReference type="UniProtKB" id="Q9Y3C0"/>
    </source>
</evidence>
<evidence type="ECO:0000255" key="2"/>
<evidence type="ECO:0000256" key="3">
    <source>
        <dbReference type="SAM" id="MobiDB-lite"/>
    </source>
</evidence>
<evidence type="ECO:0000269" key="4">
    <source>
    </source>
</evidence>
<evidence type="ECO:0000269" key="5">
    <source>
    </source>
</evidence>
<evidence type="ECO:0000305" key="6"/>
<evidence type="ECO:0000312" key="7">
    <source>
        <dbReference type="FlyBase" id="FBgn0031979"/>
    </source>
</evidence>
<keyword id="KW-0175">Coiled coil</keyword>
<keyword id="KW-0967">Endosome</keyword>
<keyword id="KW-0653">Protein transport</keyword>
<keyword id="KW-1185">Reference proteome</keyword>
<keyword id="KW-0813">Transport</keyword>
<accession>Q9VLT8</accession>
<accession>Q8SYM1</accession>